<organism>
    <name type="scientific">Gallus gallus</name>
    <name type="common">Chicken</name>
    <dbReference type="NCBI Taxonomy" id="9031"/>
    <lineage>
        <taxon>Eukaryota</taxon>
        <taxon>Metazoa</taxon>
        <taxon>Chordata</taxon>
        <taxon>Craniata</taxon>
        <taxon>Vertebrata</taxon>
        <taxon>Euteleostomi</taxon>
        <taxon>Archelosauria</taxon>
        <taxon>Archosauria</taxon>
        <taxon>Dinosauria</taxon>
        <taxon>Saurischia</taxon>
        <taxon>Theropoda</taxon>
        <taxon>Coelurosauria</taxon>
        <taxon>Aves</taxon>
        <taxon>Neognathae</taxon>
        <taxon>Galloanserae</taxon>
        <taxon>Galliformes</taxon>
        <taxon>Phasianidae</taxon>
        <taxon>Phasianinae</taxon>
        <taxon>Gallus</taxon>
    </lineage>
</organism>
<evidence type="ECO:0000250" key="1">
    <source>
        <dbReference type="UniProtKB" id="P01282"/>
    </source>
</evidence>
<evidence type="ECO:0000255" key="2"/>
<evidence type="ECO:0000269" key="3">
    <source>
    </source>
</evidence>
<evidence type="ECO:0000305" key="4"/>
<protein>
    <recommendedName>
        <fullName>VIP peptides</fullName>
    </recommendedName>
    <component>
        <recommendedName>
            <fullName>Intestinal peptide PHI-27-like</fullName>
        </recommendedName>
    </component>
    <component>
        <recommendedName>
            <fullName>Vasoactive intestinal peptide</fullName>
            <shortName>VIP</shortName>
        </recommendedName>
        <alternativeName>
            <fullName>Vasoactive intestinal polypeptide</fullName>
        </alternativeName>
    </component>
</protein>
<feature type="signal peptide" evidence="2">
    <location>
        <begin position="1"/>
        <end position="25"/>
    </location>
</feature>
<feature type="propeptide" id="PRO_0000011476">
    <location>
        <begin position="26"/>
        <end position="87"/>
    </location>
</feature>
<feature type="peptide" id="PRO_0000011477" description="Intestinal peptide PHI-27-like">
    <location>
        <begin position="89"/>
        <end position="115"/>
    </location>
</feature>
<feature type="propeptide" id="PRO_0000011478">
    <location>
        <begin position="119"/>
        <end position="126"/>
    </location>
</feature>
<feature type="peptide" id="PRO_0000011479" description="Vasoactive intestinal peptide">
    <location>
        <begin position="129"/>
        <end position="156"/>
    </location>
</feature>
<feature type="propeptide" id="PRO_0000011480">
    <location>
        <begin position="160"/>
        <end position="200"/>
    </location>
</feature>
<feature type="modified residue" description="Threonine amide" evidence="3">
    <location>
        <position position="156"/>
    </location>
</feature>
<feature type="splice variant" id="VSP_001758" description="In isoform Short." evidence="4">
    <location>
        <begin position="85"/>
        <end position="119"/>
    </location>
</feature>
<accession>P48143</accession>
<accession>P01285</accession>
<keyword id="KW-0025">Alternative splicing</keyword>
<keyword id="KW-0027">Amidation</keyword>
<keyword id="KW-0165">Cleavage on pair of basic residues</keyword>
<keyword id="KW-0903">Direct protein sequencing</keyword>
<keyword id="KW-0372">Hormone</keyword>
<keyword id="KW-1185">Reference proteome</keyword>
<keyword id="KW-0964">Secreted</keyword>
<keyword id="KW-0732">Signal</keyword>
<name>VIP_CHICK</name>
<comment type="function">
    <molecule>Vasoactive intestinal peptide</molecule>
    <text evidence="1">VIP is a neuropeptide involved in a diverse array of physiological processes through activating the PACAP subfamily of class B1 G protein-coupled receptors: VIP receptor 1 (VPR1) and VIP receptor 2 (VPR2). Abundantly expressed throughout the CNS and peripheral nervous systems where they primarily exert neuroprotective and immune modulatory roles (By similarity). Also causes vasodilation, lowers arterial blood pressure, stimulates myocardial contractility, increases glycogenolysis and relaxes the smooth muscle of trachea, stomach and gall bladder (By similarity).</text>
</comment>
<comment type="function">
    <text evidence="1">PHM-27 is a bioactive form from proteolysis of the same precursor protein, that causes vasodilation.</text>
</comment>
<comment type="subcellular location">
    <subcellularLocation>
        <location>Secreted</location>
    </subcellularLocation>
</comment>
<comment type="alternative products">
    <event type="alternative splicing"/>
    <isoform>
        <id>P48143-1</id>
        <name>Long</name>
        <sequence type="displayed"/>
    </isoform>
    <isoform>
        <id>P48143-2</id>
        <name>Short</name>
        <sequence type="described" ref="VSP_001758"/>
    </isoform>
</comment>
<comment type="similarity">
    <text evidence="4">Belongs to the glucagon family.</text>
</comment>
<reference key="1">
    <citation type="journal article" date="1995" name="Gene">
        <title>Sequence of a cDNA encoding chicken vasoactive intestinal peptide (VIP).</title>
        <authorList>
            <person name="McFarlin D.R."/>
            <person name="Lehn D.A."/>
            <person name="Moran S.M."/>
            <person name="MacDonald M.J."/>
            <person name="Epstein M.L."/>
        </authorList>
    </citation>
    <scope>NUCLEOTIDE SEQUENCE [MRNA]</scope>
    <source>
        <tissue>Brain</tissue>
    </source>
</reference>
<reference key="2">
    <citation type="submission" date="1994-08" db="EMBL/GenBank/DDBJ databases">
        <authorList>
            <person name="Talbot R.T."/>
            <person name="Dunn I.C."/>
            <person name="Wilson P.W."/>
            <person name="Sang H.M."/>
            <person name="Sharp P.J."/>
        </authorList>
    </citation>
    <scope>NUCLEOTIDE SEQUENCE [MRNA] OF 1-84 AND 120-200</scope>
    <source>
        <tissue>Hypothalamus</tissue>
    </source>
</reference>
<reference key="3">
    <citation type="journal article" date="1975" name="FEBS Lett.">
        <title>Structure of the vasoactive intestinal octacosapeptide from chicken intestine. The amino acid sequence.</title>
        <authorList>
            <person name="Nilsson A."/>
        </authorList>
    </citation>
    <scope>PROTEIN SEQUENCE OF 129-156</scope>
    <scope>AMIDATION AT THR-156</scope>
</reference>
<reference key="4">
    <citation type="journal article" date="1976" name="Bioorg. Chem.">
        <title>Vasoactive intestinal peptide (VIP) from chicken. Synthesis and properties of the C-terminal hendecapeptide.</title>
        <authorList>
            <person name="Bodanszky M."/>
            <person name="Lin C.Y."/>
            <person name="Yiotakis A.E."/>
            <person name="Mutt V."/>
            <person name="Said S.I."/>
        </authorList>
    </citation>
    <scope>SYNTHESIS OF VIP</scope>
    <scope>PROTEIN SEQUENCE OF 139-156</scope>
</reference>
<sequence>MEHRGASPLLLALALLSALCWRARALPPRGAAFPAVPRLGNRLPFDAASESDRAHGSLKSESDILQNTLPENEKFYFDLSRIIDRNARHADGIFTSVYSHLLAKLAVKRYLHSLIRKRVSSQDSPVKRHSDAVFTDNYSRFRKQMAVKKYLNSVLTGKRSQEELNPAKLRGEAEILEPSFSENYDDVSVDELLSHLPLDL</sequence>
<gene>
    <name type="primary">VIP</name>
</gene>
<dbReference type="EMBL" id="U09350">
    <property type="protein sequence ID" value="AAA87896.1"/>
    <property type="molecule type" value="mRNA"/>
</dbReference>
<dbReference type="EMBL" id="X80906">
    <property type="protein sequence ID" value="CAA56867.1"/>
    <property type="molecule type" value="mRNA"/>
</dbReference>
<dbReference type="PIR" id="S47470">
    <property type="entry name" value="VRCH"/>
</dbReference>
<dbReference type="RefSeq" id="NP_001170780.1">
    <molecule id="P48143-2"/>
    <property type="nucleotide sequence ID" value="NM_001177309.2"/>
</dbReference>
<dbReference type="RefSeq" id="NP_990697.3">
    <molecule id="P48143-1"/>
    <property type="nucleotide sequence ID" value="NM_205366.3"/>
</dbReference>
<dbReference type="SMR" id="P48143"/>
<dbReference type="FunCoup" id="P48143">
    <property type="interactions" value="6"/>
</dbReference>
<dbReference type="STRING" id="9031.ENSGALP00000022092"/>
<dbReference type="PaxDb" id="9031-ENSGALP00000040805"/>
<dbReference type="Ensembl" id="ENSGALT00010012401.1">
    <molecule id="P48143-1"/>
    <property type="protein sequence ID" value="ENSGALP00010006965.1"/>
    <property type="gene ID" value="ENSGALG00010005240.1"/>
</dbReference>
<dbReference type="Ensembl" id="ENSGALT00010012403.1">
    <molecule id="P48143-2"/>
    <property type="protein sequence ID" value="ENSGALP00010006967.1"/>
    <property type="gene ID" value="ENSGALG00010005240.1"/>
</dbReference>
<dbReference type="GeneID" id="396323"/>
<dbReference type="KEGG" id="gga:396323"/>
<dbReference type="CTD" id="7432"/>
<dbReference type="VEuPathDB" id="HostDB:geneid_396323"/>
<dbReference type="eggNOG" id="ENOG502QVTA">
    <property type="taxonomic scope" value="Eukaryota"/>
</dbReference>
<dbReference type="GeneTree" id="ENSGT00950000183154"/>
<dbReference type="InParanoid" id="P48143"/>
<dbReference type="OMA" id="PPFSDNY"/>
<dbReference type="OrthoDB" id="8795594at2759"/>
<dbReference type="PhylomeDB" id="P48143"/>
<dbReference type="Reactome" id="R-GGA-418555">
    <property type="pathway name" value="G alpha (s) signalling events"/>
</dbReference>
<dbReference type="Reactome" id="R-GGA-420092">
    <property type="pathway name" value="Glucagon-type ligand receptors"/>
</dbReference>
<dbReference type="PRO" id="PR:P48143"/>
<dbReference type="Proteomes" id="UP000000539">
    <property type="component" value="Chromosome 3"/>
</dbReference>
<dbReference type="Bgee" id="ENSGALG00000013604">
    <property type="expression patterns" value="Expressed in colon and 8 other cell types or tissues"/>
</dbReference>
<dbReference type="GO" id="GO:0005576">
    <property type="term" value="C:extracellular region"/>
    <property type="evidence" value="ECO:0007669"/>
    <property type="project" value="UniProtKB-SubCell"/>
</dbReference>
<dbReference type="GO" id="GO:0043005">
    <property type="term" value="C:neuron projection"/>
    <property type="evidence" value="ECO:0000314"/>
    <property type="project" value="AgBase"/>
</dbReference>
<dbReference type="GO" id="GO:0005184">
    <property type="term" value="F:neuropeptide hormone activity"/>
    <property type="evidence" value="ECO:0000250"/>
    <property type="project" value="UniProtKB"/>
</dbReference>
<dbReference type="GO" id="GO:0051428">
    <property type="term" value="F:peptide hormone receptor binding"/>
    <property type="evidence" value="ECO:0000318"/>
    <property type="project" value="GO_Central"/>
</dbReference>
<dbReference type="GO" id="GO:0031891">
    <property type="term" value="F:type 1 vasoactive intestinal polypeptide receptor binding"/>
    <property type="evidence" value="ECO:0000250"/>
    <property type="project" value="UniProtKB"/>
</dbReference>
<dbReference type="GO" id="GO:0007189">
    <property type="term" value="P:adenylate cyclase-activating G protein-coupled receptor signaling pathway"/>
    <property type="evidence" value="ECO:0000314"/>
    <property type="project" value="AgBase"/>
</dbReference>
<dbReference type="GO" id="GO:0048242">
    <property type="term" value="P:epinephrine secretion"/>
    <property type="evidence" value="ECO:0000315"/>
    <property type="project" value="AgBase"/>
</dbReference>
<dbReference type="GO" id="GO:0048255">
    <property type="term" value="P:mRNA stabilization"/>
    <property type="evidence" value="ECO:0000250"/>
    <property type="project" value="AgBase"/>
</dbReference>
<dbReference type="GO" id="GO:0032812">
    <property type="term" value="P:positive regulation of epinephrine secretion"/>
    <property type="evidence" value="ECO:0000315"/>
    <property type="project" value="AgBase"/>
</dbReference>
<dbReference type="GO" id="GO:0070459">
    <property type="term" value="P:prolactin secretion"/>
    <property type="evidence" value="ECO:0000250"/>
    <property type="project" value="AgBase"/>
</dbReference>
<dbReference type="GO" id="GO:0032880">
    <property type="term" value="P:regulation of protein localization"/>
    <property type="evidence" value="ECO:0000318"/>
    <property type="project" value="GO_Central"/>
</dbReference>
<dbReference type="Gene3D" id="6.10.250.590">
    <property type="match status" value="2"/>
</dbReference>
<dbReference type="InterPro" id="IPR000532">
    <property type="entry name" value="Glucagon_GIP_secretin_VIP"/>
</dbReference>
<dbReference type="InterPro" id="IPR046963">
    <property type="entry name" value="VIP/GHRH-like"/>
</dbReference>
<dbReference type="PANTHER" id="PTHR11213">
    <property type="entry name" value="GLUCAGON-FAMILY NEUROPEPTIDE"/>
    <property type="match status" value="1"/>
</dbReference>
<dbReference type="PANTHER" id="PTHR11213:SF5">
    <property type="entry name" value="VIP PEPTIDES"/>
    <property type="match status" value="1"/>
</dbReference>
<dbReference type="Pfam" id="PF00123">
    <property type="entry name" value="Hormone_2"/>
    <property type="match status" value="2"/>
</dbReference>
<dbReference type="SMART" id="SM00070">
    <property type="entry name" value="GLUCA"/>
    <property type="match status" value="2"/>
</dbReference>
<dbReference type="PROSITE" id="PS00260">
    <property type="entry name" value="GLUCAGON"/>
    <property type="match status" value="1"/>
</dbReference>
<proteinExistence type="evidence at protein level"/>